<feature type="chain" id="PRO_0000339036" description="ATP synthase subunit alpha 2">
    <location>
        <begin position="1"/>
        <end position="517"/>
    </location>
</feature>
<feature type="binding site" evidence="1">
    <location>
        <begin position="173"/>
        <end position="180"/>
    </location>
    <ligand>
        <name>ATP</name>
        <dbReference type="ChEBI" id="CHEBI:30616"/>
    </ligand>
</feature>
<feature type="site" description="Required for activity" evidence="1">
    <location>
        <position position="377"/>
    </location>
</feature>
<comment type="function">
    <text evidence="1">Produces ATP from ADP in the presence of a proton gradient across the membrane. The alpha chain is a regulatory subunit.</text>
</comment>
<comment type="catalytic activity">
    <reaction evidence="1">
        <text>ATP + H2O + 4 H(+)(in) = ADP + phosphate + 5 H(+)(out)</text>
        <dbReference type="Rhea" id="RHEA:57720"/>
        <dbReference type="ChEBI" id="CHEBI:15377"/>
        <dbReference type="ChEBI" id="CHEBI:15378"/>
        <dbReference type="ChEBI" id="CHEBI:30616"/>
        <dbReference type="ChEBI" id="CHEBI:43474"/>
        <dbReference type="ChEBI" id="CHEBI:456216"/>
        <dbReference type="EC" id="7.1.2.2"/>
    </reaction>
</comment>
<comment type="subunit">
    <text evidence="1">F-type ATPases have 2 components, CF(1) - the catalytic core - and CF(0) - the membrane proton channel. CF(1) has five subunits: alpha(3), beta(3), gamma(1), delta(1), epsilon(1). CF(0) has three main subunits: a(1), b(2) and c(9-12). The alpha and beta chains form an alternating ring which encloses part of the gamma chain. CF(1) is attached to CF(0) by a central stalk formed by the gamma and epsilon chains, while a peripheral stalk is formed by the delta and b chains.</text>
</comment>
<comment type="subcellular location">
    <subcellularLocation>
        <location evidence="1">Cell inner membrane</location>
        <topology evidence="1">Peripheral membrane protein</topology>
    </subcellularLocation>
</comment>
<comment type="similarity">
    <text evidence="1">Belongs to the ATPase alpha/beta chains family.</text>
</comment>
<keyword id="KW-0066">ATP synthesis</keyword>
<keyword id="KW-0067">ATP-binding</keyword>
<keyword id="KW-0997">Cell inner membrane</keyword>
<keyword id="KW-1003">Cell membrane</keyword>
<keyword id="KW-0139">CF(1)</keyword>
<keyword id="KW-0375">Hydrogen ion transport</keyword>
<keyword id="KW-0406">Ion transport</keyword>
<keyword id="KW-0472">Membrane</keyword>
<keyword id="KW-0547">Nucleotide-binding</keyword>
<keyword id="KW-1278">Translocase</keyword>
<keyword id="KW-0813">Transport</keyword>
<reference key="1">
    <citation type="submission" date="2006-11" db="EMBL/GenBank/DDBJ databases">
        <title>Identification and characterization of a new conjugation/ type IVA secretion system (trb/tra) of L. pneumophila Corby localized on a mobile genomic island.</title>
        <authorList>
            <person name="Gloeckner G."/>
            <person name="Albert-Weissenberger C."/>
            <person name="Weinmann E."/>
            <person name="Jacobi S."/>
            <person name="Schunder E."/>
            <person name="Steinert M."/>
            <person name="Buchrieser C."/>
            <person name="Hacker J."/>
            <person name="Heuner K."/>
        </authorList>
    </citation>
    <scope>NUCLEOTIDE SEQUENCE [LARGE SCALE GENOMIC DNA]</scope>
    <source>
        <strain>Corby</strain>
    </source>
</reference>
<sequence>MSEQVALNPSEISELIRKKIDQFSVVSEARNEGTIVSLKDGIVRLHGLADVMAGEMIEFPGGVYGLALNLKRDSVGAVILGDSSTLAEGQKGKCTGRILEVPVGKGLLGRVVDALGNPIDGKGPIESSGMSPIEKVAPGVVTRKSIDQPVQTGLKAIDAMIPVGRGQRELIIGDRQTGKTAIAIDAIINQKGTGVKCVYVAIGQKASSVASIVRKLEEHGALEHTIVVVAGASDSAALQYIAPYAGCTMGEYFMERGEDALIVYDDLTKQAWAYRQISLLLRRPPGREAYPGDIFYLHSRLLERAARINADEVEKLTNGEVKGKTGSLTALPIIETQAGDVSAFVPTNVISITDGQIFLDVDLFNSGVRPAINSGLSVSRVGGAAQTKIMKKLGGGTRLALAQFRELEAFSQFASDLDDATRKQLERGQRITELMKQKQYSPLTVAEMGVSLFVVEKGYLDDVPVNEISSFEASLHDYMRSTHAALLHAINEAGAYDNEIEAKLKKAVEEFKNTGSW</sequence>
<evidence type="ECO:0000255" key="1">
    <source>
        <dbReference type="HAMAP-Rule" id="MF_01346"/>
    </source>
</evidence>
<proteinExistence type="inferred from homology"/>
<dbReference type="EC" id="7.1.2.2" evidence="1"/>
<dbReference type="EMBL" id="CP000675">
    <property type="protein sequence ID" value="ABQ57185.1"/>
    <property type="molecule type" value="Genomic_DNA"/>
</dbReference>
<dbReference type="RefSeq" id="WP_011947879.1">
    <property type="nucleotide sequence ID" value="NC_009494.2"/>
</dbReference>
<dbReference type="SMR" id="A5III5"/>
<dbReference type="KEGG" id="lpc:LPC_3299"/>
<dbReference type="HOGENOM" id="CLU_010091_2_1_6"/>
<dbReference type="GO" id="GO:0005886">
    <property type="term" value="C:plasma membrane"/>
    <property type="evidence" value="ECO:0007669"/>
    <property type="project" value="UniProtKB-SubCell"/>
</dbReference>
<dbReference type="GO" id="GO:0045259">
    <property type="term" value="C:proton-transporting ATP synthase complex"/>
    <property type="evidence" value="ECO:0007669"/>
    <property type="project" value="UniProtKB-KW"/>
</dbReference>
<dbReference type="GO" id="GO:0043531">
    <property type="term" value="F:ADP binding"/>
    <property type="evidence" value="ECO:0007669"/>
    <property type="project" value="TreeGrafter"/>
</dbReference>
<dbReference type="GO" id="GO:0005524">
    <property type="term" value="F:ATP binding"/>
    <property type="evidence" value="ECO:0007669"/>
    <property type="project" value="UniProtKB-UniRule"/>
</dbReference>
<dbReference type="GO" id="GO:0046933">
    <property type="term" value="F:proton-transporting ATP synthase activity, rotational mechanism"/>
    <property type="evidence" value="ECO:0007669"/>
    <property type="project" value="UniProtKB-UniRule"/>
</dbReference>
<dbReference type="CDD" id="cd18113">
    <property type="entry name" value="ATP-synt_F1_alpha_C"/>
    <property type="match status" value="1"/>
</dbReference>
<dbReference type="CDD" id="cd18116">
    <property type="entry name" value="ATP-synt_F1_alpha_N"/>
    <property type="match status" value="1"/>
</dbReference>
<dbReference type="CDD" id="cd01132">
    <property type="entry name" value="F1-ATPase_alpha_CD"/>
    <property type="match status" value="1"/>
</dbReference>
<dbReference type="FunFam" id="1.20.150.20:FF:000001">
    <property type="entry name" value="ATP synthase subunit alpha"/>
    <property type="match status" value="1"/>
</dbReference>
<dbReference type="FunFam" id="2.40.30.20:FF:000001">
    <property type="entry name" value="ATP synthase subunit alpha"/>
    <property type="match status" value="1"/>
</dbReference>
<dbReference type="FunFam" id="3.40.50.300:FF:000002">
    <property type="entry name" value="ATP synthase subunit alpha"/>
    <property type="match status" value="1"/>
</dbReference>
<dbReference type="Gene3D" id="2.40.30.20">
    <property type="match status" value="1"/>
</dbReference>
<dbReference type="Gene3D" id="1.20.150.20">
    <property type="entry name" value="ATP synthase alpha/beta chain, C-terminal domain"/>
    <property type="match status" value="1"/>
</dbReference>
<dbReference type="Gene3D" id="3.40.50.300">
    <property type="entry name" value="P-loop containing nucleotide triphosphate hydrolases"/>
    <property type="match status" value="1"/>
</dbReference>
<dbReference type="HAMAP" id="MF_01346">
    <property type="entry name" value="ATP_synth_alpha_bact"/>
    <property type="match status" value="1"/>
</dbReference>
<dbReference type="InterPro" id="IPR023366">
    <property type="entry name" value="ATP_synth_asu-like_sf"/>
</dbReference>
<dbReference type="InterPro" id="IPR000793">
    <property type="entry name" value="ATP_synth_asu_C"/>
</dbReference>
<dbReference type="InterPro" id="IPR038376">
    <property type="entry name" value="ATP_synth_asu_C_sf"/>
</dbReference>
<dbReference type="InterPro" id="IPR033732">
    <property type="entry name" value="ATP_synth_F1_a_nt-bd_dom"/>
</dbReference>
<dbReference type="InterPro" id="IPR005294">
    <property type="entry name" value="ATP_synth_F1_asu"/>
</dbReference>
<dbReference type="InterPro" id="IPR020003">
    <property type="entry name" value="ATPase_a/bsu_AS"/>
</dbReference>
<dbReference type="InterPro" id="IPR004100">
    <property type="entry name" value="ATPase_F1/V1/A1_a/bsu_N"/>
</dbReference>
<dbReference type="InterPro" id="IPR036121">
    <property type="entry name" value="ATPase_F1/V1/A1_a/bsu_N_sf"/>
</dbReference>
<dbReference type="InterPro" id="IPR000194">
    <property type="entry name" value="ATPase_F1/V1/A1_a/bsu_nucl-bd"/>
</dbReference>
<dbReference type="InterPro" id="IPR027417">
    <property type="entry name" value="P-loop_NTPase"/>
</dbReference>
<dbReference type="NCBIfam" id="TIGR00962">
    <property type="entry name" value="atpA"/>
    <property type="match status" value="1"/>
</dbReference>
<dbReference type="NCBIfam" id="NF009884">
    <property type="entry name" value="PRK13343.1"/>
    <property type="match status" value="1"/>
</dbReference>
<dbReference type="PANTHER" id="PTHR48082">
    <property type="entry name" value="ATP SYNTHASE SUBUNIT ALPHA, MITOCHONDRIAL"/>
    <property type="match status" value="1"/>
</dbReference>
<dbReference type="PANTHER" id="PTHR48082:SF2">
    <property type="entry name" value="ATP SYNTHASE SUBUNIT ALPHA, MITOCHONDRIAL"/>
    <property type="match status" value="1"/>
</dbReference>
<dbReference type="Pfam" id="PF00006">
    <property type="entry name" value="ATP-synt_ab"/>
    <property type="match status" value="1"/>
</dbReference>
<dbReference type="Pfam" id="PF00306">
    <property type="entry name" value="ATP-synt_ab_C"/>
    <property type="match status" value="1"/>
</dbReference>
<dbReference type="Pfam" id="PF02874">
    <property type="entry name" value="ATP-synt_ab_N"/>
    <property type="match status" value="1"/>
</dbReference>
<dbReference type="PIRSF" id="PIRSF039088">
    <property type="entry name" value="F_ATPase_subunit_alpha"/>
    <property type="match status" value="1"/>
</dbReference>
<dbReference type="SUPFAM" id="SSF47917">
    <property type="entry name" value="C-terminal domain of alpha and beta subunits of F1 ATP synthase"/>
    <property type="match status" value="1"/>
</dbReference>
<dbReference type="SUPFAM" id="SSF50615">
    <property type="entry name" value="N-terminal domain of alpha and beta subunits of F1 ATP synthase"/>
    <property type="match status" value="1"/>
</dbReference>
<dbReference type="SUPFAM" id="SSF52540">
    <property type="entry name" value="P-loop containing nucleoside triphosphate hydrolases"/>
    <property type="match status" value="1"/>
</dbReference>
<dbReference type="PROSITE" id="PS00152">
    <property type="entry name" value="ATPASE_ALPHA_BETA"/>
    <property type="match status" value="1"/>
</dbReference>
<protein>
    <recommendedName>
        <fullName evidence="1">ATP synthase subunit alpha 2</fullName>
        <ecNumber evidence="1">7.1.2.2</ecNumber>
    </recommendedName>
    <alternativeName>
        <fullName evidence="1">ATP synthase F1 sector subunit alpha 2</fullName>
    </alternativeName>
    <alternativeName>
        <fullName evidence="1">F-ATPase subunit alpha 2</fullName>
    </alternativeName>
</protein>
<gene>
    <name evidence="1" type="primary">atpA2</name>
    <name type="ordered locus">LPC_3299</name>
</gene>
<organism>
    <name type="scientific">Legionella pneumophila (strain Corby)</name>
    <dbReference type="NCBI Taxonomy" id="400673"/>
    <lineage>
        <taxon>Bacteria</taxon>
        <taxon>Pseudomonadati</taxon>
        <taxon>Pseudomonadota</taxon>
        <taxon>Gammaproteobacteria</taxon>
        <taxon>Legionellales</taxon>
        <taxon>Legionellaceae</taxon>
        <taxon>Legionella</taxon>
    </lineage>
</organism>
<name>ATPA2_LEGPC</name>
<accession>A5III5</accession>